<keyword id="KW-0648">Protein biosynthesis</keyword>
<keyword id="KW-1185">Reference proteome</keyword>
<keyword id="KW-0808">Transferase</keyword>
<comment type="function">
    <text evidence="1">Attaches a formyl group to the free amino group of methionyl-tRNA(fMet). The formyl group appears to play a dual role in the initiator identity of N-formylmethionyl-tRNA by promoting its recognition by IF2 and preventing the misappropriation of this tRNA by the elongation apparatus.</text>
</comment>
<comment type="catalytic activity">
    <reaction evidence="1">
        <text>L-methionyl-tRNA(fMet) + (6R)-10-formyltetrahydrofolate = N-formyl-L-methionyl-tRNA(fMet) + (6S)-5,6,7,8-tetrahydrofolate + H(+)</text>
        <dbReference type="Rhea" id="RHEA:24380"/>
        <dbReference type="Rhea" id="RHEA-COMP:9952"/>
        <dbReference type="Rhea" id="RHEA-COMP:9953"/>
        <dbReference type="ChEBI" id="CHEBI:15378"/>
        <dbReference type="ChEBI" id="CHEBI:57453"/>
        <dbReference type="ChEBI" id="CHEBI:78530"/>
        <dbReference type="ChEBI" id="CHEBI:78844"/>
        <dbReference type="ChEBI" id="CHEBI:195366"/>
        <dbReference type="EC" id="2.1.2.9"/>
    </reaction>
</comment>
<comment type="similarity">
    <text evidence="1">Belongs to the Fmt family.</text>
</comment>
<name>FMT_SPHAL</name>
<gene>
    <name evidence="1" type="primary">fmt</name>
    <name type="ordered locus">Sala_0249</name>
</gene>
<reference key="1">
    <citation type="journal article" date="2009" name="Proc. Natl. Acad. Sci. U.S.A.">
        <title>The genomic basis of trophic strategy in marine bacteria.</title>
        <authorList>
            <person name="Lauro F.M."/>
            <person name="McDougald D."/>
            <person name="Thomas T."/>
            <person name="Williams T.J."/>
            <person name="Egan S."/>
            <person name="Rice S."/>
            <person name="DeMaere M.Z."/>
            <person name="Ting L."/>
            <person name="Ertan H."/>
            <person name="Johnson J."/>
            <person name="Ferriera S."/>
            <person name="Lapidus A."/>
            <person name="Anderson I."/>
            <person name="Kyrpides N."/>
            <person name="Munk A.C."/>
            <person name="Detter C."/>
            <person name="Han C.S."/>
            <person name="Brown M.V."/>
            <person name="Robb F.T."/>
            <person name="Kjelleberg S."/>
            <person name="Cavicchioli R."/>
        </authorList>
    </citation>
    <scope>NUCLEOTIDE SEQUENCE [LARGE SCALE GENOMIC DNA]</scope>
    <source>
        <strain>DSM 13593 / LMG 18877 / RB2256</strain>
    </source>
</reference>
<organism>
    <name type="scientific">Sphingopyxis alaskensis (strain DSM 13593 / LMG 18877 / RB2256)</name>
    <name type="common">Sphingomonas alaskensis</name>
    <dbReference type="NCBI Taxonomy" id="317655"/>
    <lineage>
        <taxon>Bacteria</taxon>
        <taxon>Pseudomonadati</taxon>
        <taxon>Pseudomonadota</taxon>
        <taxon>Alphaproteobacteria</taxon>
        <taxon>Sphingomonadales</taxon>
        <taxon>Sphingomonadaceae</taxon>
        <taxon>Sphingopyxis</taxon>
    </lineage>
</organism>
<accession>Q1GWK0</accession>
<sequence>MRIAFMGTPPFAVPTLAALHTAGHDIAAVYSQPPRPAQRGKKLQKSPVQLWAEEHGLPVRTPKSLKSDEAQAEFAALDLDVAVVAAYGLILPQAVLDAPREGCLNVHGSILPRWRGAAPVQRAILAGDAETGVTIMQMDAGLDTGAMRLIETTPVARKSAGLLTHELAEMGALMMRRVLSELHAFPPVPQPDEGVTYAAKIDKSEARLDFLVSAVQVERQVRAFNPAPGAFFELEGERYKVLAAEVVHPAETVAGAAPGVTIDDRLAIACNPGAIRVTRIQRAGKPAMEAGEMLRGRGIAKGTRLA</sequence>
<protein>
    <recommendedName>
        <fullName evidence="1">Methionyl-tRNA formyltransferase</fullName>
        <ecNumber evidence="1">2.1.2.9</ecNumber>
    </recommendedName>
</protein>
<evidence type="ECO:0000255" key="1">
    <source>
        <dbReference type="HAMAP-Rule" id="MF_00182"/>
    </source>
</evidence>
<feature type="chain" id="PRO_1000020169" description="Methionyl-tRNA formyltransferase">
    <location>
        <begin position="1"/>
        <end position="306"/>
    </location>
</feature>
<feature type="binding site" evidence="1">
    <location>
        <begin position="109"/>
        <end position="112"/>
    </location>
    <ligand>
        <name>(6S)-5,6,7,8-tetrahydrofolate</name>
        <dbReference type="ChEBI" id="CHEBI:57453"/>
    </ligand>
</feature>
<dbReference type="EC" id="2.1.2.9" evidence="1"/>
<dbReference type="EMBL" id="CP000356">
    <property type="protein sequence ID" value="ABF51972.1"/>
    <property type="molecule type" value="Genomic_DNA"/>
</dbReference>
<dbReference type="RefSeq" id="WP_011540564.1">
    <property type="nucleotide sequence ID" value="NC_008048.1"/>
</dbReference>
<dbReference type="SMR" id="Q1GWK0"/>
<dbReference type="STRING" id="317655.Sala_0249"/>
<dbReference type="KEGG" id="sal:Sala_0249"/>
<dbReference type="eggNOG" id="COG0223">
    <property type="taxonomic scope" value="Bacteria"/>
</dbReference>
<dbReference type="HOGENOM" id="CLU_033347_1_2_5"/>
<dbReference type="OrthoDB" id="9802815at2"/>
<dbReference type="Proteomes" id="UP000006578">
    <property type="component" value="Chromosome"/>
</dbReference>
<dbReference type="GO" id="GO:0005829">
    <property type="term" value="C:cytosol"/>
    <property type="evidence" value="ECO:0007669"/>
    <property type="project" value="TreeGrafter"/>
</dbReference>
<dbReference type="GO" id="GO:0004479">
    <property type="term" value="F:methionyl-tRNA formyltransferase activity"/>
    <property type="evidence" value="ECO:0007669"/>
    <property type="project" value="UniProtKB-UniRule"/>
</dbReference>
<dbReference type="CDD" id="cd08646">
    <property type="entry name" value="FMT_core_Met-tRNA-FMT_N"/>
    <property type="match status" value="1"/>
</dbReference>
<dbReference type="CDD" id="cd08704">
    <property type="entry name" value="Met_tRNA_FMT_C"/>
    <property type="match status" value="1"/>
</dbReference>
<dbReference type="Gene3D" id="3.40.50.12230">
    <property type="match status" value="1"/>
</dbReference>
<dbReference type="HAMAP" id="MF_00182">
    <property type="entry name" value="Formyl_trans"/>
    <property type="match status" value="1"/>
</dbReference>
<dbReference type="InterPro" id="IPR005794">
    <property type="entry name" value="Fmt"/>
</dbReference>
<dbReference type="InterPro" id="IPR005793">
    <property type="entry name" value="Formyl_trans_C"/>
</dbReference>
<dbReference type="InterPro" id="IPR002376">
    <property type="entry name" value="Formyl_transf_N"/>
</dbReference>
<dbReference type="InterPro" id="IPR036477">
    <property type="entry name" value="Formyl_transf_N_sf"/>
</dbReference>
<dbReference type="InterPro" id="IPR011034">
    <property type="entry name" value="Formyl_transferase-like_C_sf"/>
</dbReference>
<dbReference type="InterPro" id="IPR044135">
    <property type="entry name" value="Met-tRNA-FMT_C"/>
</dbReference>
<dbReference type="InterPro" id="IPR041711">
    <property type="entry name" value="Met-tRNA-FMT_N"/>
</dbReference>
<dbReference type="NCBIfam" id="TIGR00460">
    <property type="entry name" value="fmt"/>
    <property type="match status" value="1"/>
</dbReference>
<dbReference type="PANTHER" id="PTHR11138">
    <property type="entry name" value="METHIONYL-TRNA FORMYLTRANSFERASE"/>
    <property type="match status" value="1"/>
</dbReference>
<dbReference type="PANTHER" id="PTHR11138:SF5">
    <property type="entry name" value="METHIONYL-TRNA FORMYLTRANSFERASE, MITOCHONDRIAL"/>
    <property type="match status" value="1"/>
</dbReference>
<dbReference type="Pfam" id="PF02911">
    <property type="entry name" value="Formyl_trans_C"/>
    <property type="match status" value="1"/>
</dbReference>
<dbReference type="Pfam" id="PF00551">
    <property type="entry name" value="Formyl_trans_N"/>
    <property type="match status" value="1"/>
</dbReference>
<dbReference type="SUPFAM" id="SSF50486">
    <property type="entry name" value="FMT C-terminal domain-like"/>
    <property type="match status" value="1"/>
</dbReference>
<dbReference type="SUPFAM" id="SSF53328">
    <property type="entry name" value="Formyltransferase"/>
    <property type="match status" value="1"/>
</dbReference>
<proteinExistence type="inferred from homology"/>